<reference key="1">
    <citation type="journal article" date="1995" name="Microbiology">
        <title>Complete nucleotide sequence of a skin element excised by DNA rearrangement during sporulation in Bacillus subtilis.</title>
        <authorList>
            <person name="Takemaru K."/>
            <person name="Mizuno M."/>
            <person name="Sato T."/>
            <person name="Takeuchi M."/>
            <person name="Kobayashi Y."/>
        </authorList>
    </citation>
    <scope>NUCLEOTIDE SEQUENCE [GENOMIC DNA]</scope>
    <source>
        <strain>168 / JH642</strain>
    </source>
</reference>
<reference key="2">
    <citation type="journal article" date="1996" name="Microbiology">
        <title>Systematic sequencing of the 283 kb 210 degrees-232 degrees region of the Bacillus subtilis genome containing the skin element and many sporulation genes.</title>
        <authorList>
            <person name="Mizuno M."/>
            <person name="Masuda S."/>
            <person name="Takemaru K."/>
            <person name="Hosono S."/>
            <person name="Sato T."/>
            <person name="Takeuchi M."/>
            <person name="Kobayashi Y."/>
        </authorList>
    </citation>
    <scope>NUCLEOTIDE SEQUENCE [GENOMIC DNA]</scope>
    <source>
        <strain>168 / JH642</strain>
    </source>
</reference>
<reference key="3">
    <citation type="journal article" date="1997" name="Nature">
        <title>The complete genome sequence of the Gram-positive bacterium Bacillus subtilis.</title>
        <authorList>
            <person name="Kunst F."/>
            <person name="Ogasawara N."/>
            <person name="Moszer I."/>
            <person name="Albertini A.M."/>
            <person name="Alloni G."/>
            <person name="Azevedo V."/>
            <person name="Bertero M.G."/>
            <person name="Bessieres P."/>
            <person name="Bolotin A."/>
            <person name="Borchert S."/>
            <person name="Borriss R."/>
            <person name="Boursier L."/>
            <person name="Brans A."/>
            <person name="Braun M."/>
            <person name="Brignell S.C."/>
            <person name="Bron S."/>
            <person name="Brouillet S."/>
            <person name="Bruschi C.V."/>
            <person name="Caldwell B."/>
            <person name="Capuano V."/>
            <person name="Carter N.M."/>
            <person name="Choi S.-K."/>
            <person name="Codani J.-J."/>
            <person name="Connerton I.F."/>
            <person name="Cummings N.J."/>
            <person name="Daniel R.A."/>
            <person name="Denizot F."/>
            <person name="Devine K.M."/>
            <person name="Duesterhoeft A."/>
            <person name="Ehrlich S.D."/>
            <person name="Emmerson P.T."/>
            <person name="Entian K.-D."/>
            <person name="Errington J."/>
            <person name="Fabret C."/>
            <person name="Ferrari E."/>
            <person name="Foulger D."/>
            <person name="Fritz C."/>
            <person name="Fujita M."/>
            <person name="Fujita Y."/>
            <person name="Fuma S."/>
            <person name="Galizzi A."/>
            <person name="Galleron N."/>
            <person name="Ghim S.-Y."/>
            <person name="Glaser P."/>
            <person name="Goffeau A."/>
            <person name="Golightly E.J."/>
            <person name="Grandi G."/>
            <person name="Guiseppi G."/>
            <person name="Guy B.J."/>
            <person name="Haga K."/>
            <person name="Haiech J."/>
            <person name="Harwood C.R."/>
            <person name="Henaut A."/>
            <person name="Hilbert H."/>
            <person name="Holsappel S."/>
            <person name="Hosono S."/>
            <person name="Hullo M.-F."/>
            <person name="Itaya M."/>
            <person name="Jones L.-M."/>
            <person name="Joris B."/>
            <person name="Karamata D."/>
            <person name="Kasahara Y."/>
            <person name="Klaerr-Blanchard M."/>
            <person name="Klein C."/>
            <person name="Kobayashi Y."/>
            <person name="Koetter P."/>
            <person name="Koningstein G."/>
            <person name="Krogh S."/>
            <person name="Kumano M."/>
            <person name="Kurita K."/>
            <person name="Lapidus A."/>
            <person name="Lardinois S."/>
            <person name="Lauber J."/>
            <person name="Lazarevic V."/>
            <person name="Lee S.-M."/>
            <person name="Levine A."/>
            <person name="Liu H."/>
            <person name="Masuda S."/>
            <person name="Mauel C."/>
            <person name="Medigue C."/>
            <person name="Medina N."/>
            <person name="Mellado R.P."/>
            <person name="Mizuno M."/>
            <person name="Moestl D."/>
            <person name="Nakai S."/>
            <person name="Noback M."/>
            <person name="Noone D."/>
            <person name="O'Reilly M."/>
            <person name="Ogawa K."/>
            <person name="Ogiwara A."/>
            <person name="Oudega B."/>
            <person name="Park S.-H."/>
            <person name="Parro V."/>
            <person name="Pohl T.M."/>
            <person name="Portetelle D."/>
            <person name="Porwollik S."/>
            <person name="Prescott A.M."/>
            <person name="Presecan E."/>
            <person name="Pujic P."/>
            <person name="Purnelle B."/>
            <person name="Rapoport G."/>
            <person name="Rey M."/>
            <person name="Reynolds S."/>
            <person name="Rieger M."/>
            <person name="Rivolta C."/>
            <person name="Rocha E."/>
            <person name="Roche B."/>
            <person name="Rose M."/>
            <person name="Sadaie Y."/>
            <person name="Sato T."/>
            <person name="Scanlan E."/>
            <person name="Schleich S."/>
            <person name="Schroeter R."/>
            <person name="Scoffone F."/>
            <person name="Sekiguchi J."/>
            <person name="Sekowska A."/>
            <person name="Seror S.J."/>
            <person name="Serror P."/>
            <person name="Shin B.-S."/>
            <person name="Soldo B."/>
            <person name="Sorokin A."/>
            <person name="Tacconi E."/>
            <person name="Takagi T."/>
            <person name="Takahashi H."/>
            <person name="Takemaru K."/>
            <person name="Takeuchi M."/>
            <person name="Tamakoshi A."/>
            <person name="Tanaka T."/>
            <person name="Terpstra P."/>
            <person name="Tognoni A."/>
            <person name="Tosato V."/>
            <person name="Uchiyama S."/>
            <person name="Vandenbol M."/>
            <person name="Vannier F."/>
            <person name="Vassarotti A."/>
            <person name="Viari A."/>
            <person name="Wambutt R."/>
            <person name="Wedler E."/>
            <person name="Wedler H."/>
            <person name="Weitzenegger T."/>
            <person name="Winters P."/>
            <person name="Wipat A."/>
            <person name="Yamamoto H."/>
            <person name="Yamane K."/>
            <person name="Yasumoto K."/>
            <person name="Yata K."/>
            <person name="Yoshida K."/>
            <person name="Yoshikawa H.-F."/>
            <person name="Zumstein E."/>
            <person name="Yoshikawa H."/>
            <person name="Danchin A."/>
        </authorList>
    </citation>
    <scope>NUCLEOTIDE SEQUENCE [LARGE SCALE GENOMIC DNA]</scope>
    <source>
        <strain>168</strain>
    </source>
</reference>
<reference key="4">
    <citation type="journal article" date="1995" name="Gene">
        <title>Analysis of a Bacillus subtilis genome fragment using a co-operative computer system prototype.</title>
        <authorList>
            <person name="Medigue C."/>
            <person name="Moszer I."/>
            <person name="Viari A."/>
            <person name="Danchin A."/>
        </authorList>
    </citation>
    <scope>IDENTIFICATION</scope>
</reference>
<reference key="5">
    <citation type="journal article" date="1998" name="J. Bacteriol.">
        <title>The ars operon in the skin element of Bacillus subtilis confers resistance to arsenate and arsenite.</title>
        <authorList>
            <person name="Sato T."/>
            <person name="Kobayashi Y."/>
        </authorList>
    </citation>
    <scope>INDUCTION</scope>
    <scope>DISRUPTION PHENOTYPE</scope>
    <source>
        <strain>168 / JH642</strain>
    </source>
</reference>
<reference key="6">
    <citation type="journal article" date="2006" name="J. Mol. Biol.">
        <title>Interplay between ion binding and catalysis in the thioredoxin-coupled arsenate reductase family.</title>
        <authorList>
            <person name="Roos G."/>
            <person name="Buts L."/>
            <person name="Van Belle K."/>
            <person name="Brosens E."/>
            <person name="Geerlings P."/>
            <person name="Loris R."/>
            <person name="Wyns L."/>
            <person name="Messens J."/>
        </authorList>
    </citation>
    <scope>FUNCTION</scope>
    <scope>CATALYTIC ACTIVITY</scope>
    <scope>ACTIVITY REGULATION</scope>
    <scope>BIOPHYSICOCHEMICAL PROPERTIES</scope>
    <scope>MUTAGENESIS OF LYS-33</scope>
</reference>
<reference evidence="10" key="7">
    <citation type="journal article" date="2001" name="Proc. Natl. Acad. Sci. U.S.A.">
        <title>Bacillus subtilis arsenate reductase is structurally and functionally similar to low molecular weight protein tyrosine phosphatases.</title>
        <authorList>
            <person name="Bennett M.S."/>
            <person name="Guan Z."/>
            <person name="Laurberg M."/>
            <person name="Su X.D."/>
        </authorList>
    </citation>
    <scope>X-RAY CRYSTALLOGRAPHY (1.60 ANGSTROMS)</scope>
    <scope>FUNCTION</scope>
    <scope>SUBUNIT</scope>
    <scope>ACTIVE SITE</scope>
</reference>
<reference evidence="11 12" key="8">
    <citation type="journal article" date="2005" name="J. Biol. Chem.">
        <title>Solution structures and backbone dynamics of arsenate reductase from Bacillus subtilis: reversible conformational switch associated with arsenate reduction.</title>
        <authorList>
            <person name="Guo X."/>
            <person name="Li Y."/>
            <person name="Peng K."/>
            <person name="Hu Y."/>
            <person name="Li C."/>
            <person name="Xia B."/>
            <person name="Jin C."/>
        </authorList>
    </citation>
    <scope>STRUCTURE BY NMR OF REDUCED AND OXIDIZED FORMS</scope>
    <scope>REACTION MECHANISM</scope>
</reference>
<reference evidence="13" key="9">
    <citation type="journal article" date="2007" name="J. Biol. Chem.">
        <title>Conformational fluctuations coupled to the thiol-disulfide transfer between thioredoxin and arsenate reductase in Bacillus subtilis.</title>
        <authorList>
            <person name="Li Y."/>
            <person name="Hu Y."/>
            <person name="Zhang X."/>
            <person name="Xu H."/>
            <person name="Lescop E."/>
            <person name="Xia B."/>
            <person name="Jin C."/>
        </authorList>
    </citation>
    <scope>STRUCTURE BY NMR IN COMPLEX WITH THIOREDOXIN</scope>
</reference>
<sequence length="139" mass="15595">MENKIIYFLCTGNSCRSQMAEGWAKQYLGDEWKVYSAGIEAHGLNPNAVKAMKEVGIDISNQTSDIIDSDILNNADLVVTLCGDAADKCPMTPPHVKREHWGFDDPARAQGTEEEKWAFFQRVRDEIGNRLKEFAETGK</sequence>
<proteinExistence type="evidence at protein level"/>
<organism>
    <name type="scientific">Bacillus subtilis (strain 168)</name>
    <dbReference type="NCBI Taxonomy" id="224308"/>
    <lineage>
        <taxon>Bacteria</taxon>
        <taxon>Bacillati</taxon>
        <taxon>Bacillota</taxon>
        <taxon>Bacilli</taxon>
        <taxon>Bacillales</taxon>
        <taxon>Bacillaceae</taxon>
        <taxon>Bacillus</taxon>
    </lineage>
</organism>
<comment type="function">
    <text evidence="2 3">Catalyzes the reduction of arsenate [As(V)] to arsenite [As(III)] (PubMed:16797027). In vitro, can dephosphorylate para-nitrophenyl phosphate (pNPP) (PubMed:11698660).</text>
</comment>
<comment type="catalytic activity">
    <reaction evidence="1 3">
        <text>arsenate + [thioredoxin]-dithiol + H(+) = arsenite + [thioredoxin]-disulfide + H2O</text>
        <dbReference type="Rhea" id="RHEA:43848"/>
        <dbReference type="Rhea" id="RHEA-COMP:10698"/>
        <dbReference type="Rhea" id="RHEA-COMP:10700"/>
        <dbReference type="ChEBI" id="CHEBI:15377"/>
        <dbReference type="ChEBI" id="CHEBI:15378"/>
        <dbReference type="ChEBI" id="CHEBI:29242"/>
        <dbReference type="ChEBI" id="CHEBI:29950"/>
        <dbReference type="ChEBI" id="CHEBI:48597"/>
        <dbReference type="ChEBI" id="CHEBI:50058"/>
        <dbReference type="EC" id="1.20.4.4"/>
    </reaction>
</comment>
<comment type="activity regulation">
    <text evidence="3">Activity is potassium and sulfate-independent.</text>
</comment>
<comment type="biophysicochemical properties">
    <kinetics>
        <KM evidence="3">54 uM for arsenate (in the presence of KCl)</KM>
        <KM evidence="3">58 uM for arsenate (in the presence of NaCl)</KM>
        <KM evidence="3">64 uM for arsenate (in the presence of Na(2)SO(4))</KM>
        <KM evidence="3">47 uM for arsenate (in the presence of K(2)SO(4))</KM>
        <text evidence="3">kcat is 96 min(-1) in the presence of KCl (PubMed:16797027). kcat is 80 min(-1) in the presence of NaCl (PubMed:16797027). kcat is 120 min(-1) in the presence of Na(2)SO(4) (PubMed:16797027). kcat is 95 min(-1) in the presence of K(2)SO(4) (PubMed:16797027).</text>
    </kinetics>
</comment>
<comment type="subunit">
    <text evidence="2">Monomer.</text>
</comment>
<comment type="subcellular location">
    <subcellularLocation>
        <location evidence="1">Cytoplasm</location>
    </subcellularLocation>
</comment>
<comment type="induction">
    <text evidence="4">Induced by arsenate, arsenite, and antimonite.</text>
</comment>
<comment type="disruption phenotype">
    <text evidence="4">Mutant is sensitive to arsenate but is still resistant to arsenite.</text>
</comment>
<comment type="similarity">
    <text evidence="1 7">Belongs to the low molecular weight phosphotyrosine protein phosphatase family. Thioredoxin-coupled ArsC subfamily.</text>
</comment>
<accession>P45947</accession>
<keyword id="KW-0002">3D-structure</keyword>
<keyword id="KW-0059">Arsenical resistance</keyword>
<keyword id="KW-0963">Cytoplasm</keyword>
<keyword id="KW-1015">Disulfide bond</keyword>
<keyword id="KW-0560">Oxidoreductase</keyword>
<keyword id="KW-0676">Redox-active center</keyword>
<keyword id="KW-1185">Reference proteome</keyword>
<name>ARSC_BACSU</name>
<protein>
    <recommendedName>
        <fullName evidence="1 6">Arsenate reductase</fullName>
        <ecNumber evidence="1 3">1.20.4.4</ecNumber>
    </recommendedName>
    <alternativeName>
        <fullName>Arsenical pump modifier</fullName>
    </alternativeName>
    <alternativeName>
        <fullName>Protein ArsC</fullName>
    </alternativeName>
</protein>
<dbReference type="EC" id="1.20.4.4" evidence="1 3"/>
<dbReference type="EMBL" id="D32216">
    <property type="protein sequence ID" value="BAA06970.1"/>
    <property type="molecule type" value="Genomic_DNA"/>
</dbReference>
<dbReference type="EMBL" id="D84432">
    <property type="protein sequence ID" value="BAA12434.1"/>
    <property type="molecule type" value="Genomic_DNA"/>
</dbReference>
<dbReference type="EMBL" id="AL009126">
    <property type="protein sequence ID" value="CAB14519.1"/>
    <property type="molecule type" value="Genomic_DNA"/>
</dbReference>
<dbReference type="PIR" id="C69950">
    <property type="entry name" value="C69950"/>
</dbReference>
<dbReference type="RefSeq" id="NP_390455.1">
    <property type="nucleotide sequence ID" value="NC_000964.3"/>
</dbReference>
<dbReference type="RefSeq" id="WP_004398596.1">
    <property type="nucleotide sequence ID" value="NZ_OZ025638.1"/>
</dbReference>
<dbReference type="PDB" id="1JL3">
    <property type="method" value="X-ray"/>
    <property type="resolution" value="1.60 A"/>
    <property type="chains" value="A/B/C/D=1-139"/>
</dbReference>
<dbReference type="PDB" id="1Z2D">
    <property type="method" value="NMR"/>
    <property type="chains" value="A=1-139"/>
</dbReference>
<dbReference type="PDB" id="1Z2E">
    <property type="method" value="NMR"/>
    <property type="chains" value="A=1-139"/>
</dbReference>
<dbReference type="PDB" id="2IPA">
    <property type="method" value="NMR"/>
    <property type="chains" value="B=1-139"/>
</dbReference>
<dbReference type="PDBsum" id="1JL3"/>
<dbReference type="PDBsum" id="1Z2D"/>
<dbReference type="PDBsum" id="1Z2E"/>
<dbReference type="PDBsum" id="2IPA"/>
<dbReference type="BMRB" id="P45947"/>
<dbReference type="SMR" id="P45947"/>
<dbReference type="FunCoup" id="P45947">
    <property type="interactions" value="187"/>
</dbReference>
<dbReference type="STRING" id="224308.BSU25780"/>
<dbReference type="PaxDb" id="224308-BSU25780"/>
<dbReference type="EnsemblBacteria" id="CAB14519">
    <property type="protein sequence ID" value="CAB14519"/>
    <property type="gene ID" value="BSU_25780"/>
</dbReference>
<dbReference type="GeneID" id="937801"/>
<dbReference type="KEGG" id="bsu:BSU25780"/>
<dbReference type="PATRIC" id="fig|224308.179.peg.2802"/>
<dbReference type="eggNOG" id="COG0394">
    <property type="taxonomic scope" value="Bacteria"/>
</dbReference>
<dbReference type="InParanoid" id="P45947"/>
<dbReference type="OrthoDB" id="9784339at2"/>
<dbReference type="PhylomeDB" id="P45947"/>
<dbReference type="BioCyc" id="BSUB:BSU25780-MONOMER"/>
<dbReference type="BRENDA" id="1.20.4.4">
    <property type="organism ID" value="658"/>
</dbReference>
<dbReference type="SABIO-RK" id="P45947"/>
<dbReference type="EvolutionaryTrace" id="P45947"/>
<dbReference type="Proteomes" id="UP000001570">
    <property type="component" value="Chromosome"/>
</dbReference>
<dbReference type="GO" id="GO:0005737">
    <property type="term" value="C:cytoplasm"/>
    <property type="evidence" value="ECO:0007669"/>
    <property type="project" value="UniProtKB-SubCell"/>
</dbReference>
<dbReference type="GO" id="GO:0030612">
    <property type="term" value="F:arsenate reductase (thioredoxin) activity"/>
    <property type="evidence" value="ECO:0007669"/>
    <property type="project" value="UniProtKB-UniRule"/>
</dbReference>
<dbReference type="GO" id="GO:0004725">
    <property type="term" value="F:protein tyrosine phosphatase activity"/>
    <property type="evidence" value="ECO:0007669"/>
    <property type="project" value="InterPro"/>
</dbReference>
<dbReference type="GO" id="GO:0046685">
    <property type="term" value="P:response to arsenic-containing substance"/>
    <property type="evidence" value="ECO:0007669"/>
    <property type="project" value="UniProtKB-KW"/>
</dbReference>
<dbReference type="CDD" id="cd16345">
    <property type="entry name" value="LMWP_ArsC"/>
    <property type="match status" value="1"/>
</dbReference>
<dbReference type="FunFam" id="3.40.50.2300:FF:000237">
    <property type="entry name" value="Arsenate reductase"/>
    <property type="match status" value="1"/>
</dbReference>
<dbReference type="Gene3D" id="3.40.50.2300">
    <property type="match status" value="1"/>
</dbReference>
<dbReference type="HAMAP" id="MF_01624">
    <property type="entry name" value="Arsenate_reduct"/>
    <property type="match status" value="1"/>
</dbReference>
<dbReference type="InterPro" id="IPR014064">
    <property type="entry name" value="Arsenate_reductase_ArsC"/>
</dbReference>
<dbReference type="InterPro" id="IPR023485">
    <property type="entry name" value="Ptyr_pPase"/>
</dbReference>
<dbReference type="InterPro" id="IPR036196">
    <property type="entry name" value="Ptyr_pPase_sf"/>
</dbReference>
<dbReference type="NCBIfam" id="TIGR02691">
    <property type="entry name" value="arsC_pI258_fam"/>
    <property type="match status" value="1"/>
</dbReference>
<dbReference type="NCBIfam" id="NF010053">
    <property type="entry name" value="PRK13530.1"/>
    <property type="match status" value="1"/>
</dbReference>
<dbReference type="PANTHER" id="PTHR43428">
    <property type="entry name" value="ARSENATE REDUCTASE"/>
    <property type="match status" value="1"/>
</dbReference>
<dbReference type="PANTHER" id="PTHR43428:SF1">
    <property type="entry name" value="ARSENATE REDUCTASE"/>
    <property type="match status" value="1"/>
</dbReference>
<dbReference type="Pfam" id="PF01451">
    <property type="entry name" value="LMWPc"/>
    <property type="match status" value="1"/>
</dbReference>
<dbReference type="SMART" id="SM00226">
    <property type="entry name" value="LMWPc"/>
    <property type="match status" value="1"/>
</dbReference>
<dbReference type="SUPFAM" id="SSF52788">
    <property type="entry name" value="Phosphotyrosine protein phosphatases I"/>
    <property type="match status" value="1"/>
</dbReference>
<feature type="chain" id="PRO_0000162520" description="Arsenate reductase">
    <location>
        <begin position="1"/>
        <end position="139"/>
    </location>
</feature>
<feature type="active site" description="Nucleophile" evidence="1 8">
    <location>
        <position position="10"/>
    </location>
</feature>
<feature type="active site" description="Nucleophile" evidence="1 8">
    <location>
        <position position="82"/>
    </location>
</feature>
<feature type="active site" description="Nucleophile" evidence="1 8">
    <location>
        <position position="89"/>
    </location>
</feature>
<feature type="disulfide bond" description="Redox-active; alternate" evidence="1 9">
    <location>
        <begin position="10"/>
        <end position="82"/>
    </location>
</feature>
<feature type="disulfide bond" description="Redox-active; alternate" evidence="1 9 12">
    <location>
        <begin position="82"/>
        <end position="89"/>
    </location>
</feature>
<feature type="mutagenesis site" description="Binds potassium in the micromolar range." evidence="3">
    <original>K</original>
    <variation>N</variation>
    <location>
        <position position="33"/>
    </location>
</feature>
<feature type="strand" evidence="14">
    <location>
        <begin position="4"/>
        <end position="15"/>
    </location>
</feature>
<feature type="helix" evidence="14">
    <location>
        <begin position="16"/>
        <end position="27"/>
    </location>
</feature>
<feature type="turn" evidence="16">
    <location>
        <begin position="28"/>
        <end position="30"/>
    </location>
</feature>
<feature type="strand" evidence="14">
    <location>
        <begin position="32"/>
        <end position="40"/>
    </location>
</feature>
<feature type="helix" evidence="14">
    <location>
        <begin position="46"/>
        <end position="54"/>
    </location>
</feature>
<feature type="helix" evidence="15">
    <location>
        <begin position="59"/>
        <end position="61"/>
    </location>
</feature>
<feature type="helix" evidence="14">
    <location>
        <begin position="69"/>
        <end position="72"/>
    </location>
</feature>
<feature type="strand" evidence="14">
    <location>
        <begin position="76"/>
        <end position="80"/>
    </location>
</feature>
<feature type="helix" evidence="14">
    <location>
        <begin position="83"/>
        <end position="88"/>
    </location>
</feature>
<feature type="strand" evidence="14">
    <location>
        <begin position="96"/>
        <end position="100"/>
    </location>
</feature>
<feature type="helix" evidence="14">
    <location>
        <begin position="106"/>
        <end position="108"/>
    </location>
</feature>
<feature type="helix" evidence="14">
    <location>
        <begin position="113"/>
        <end position="137"/>
    </location>
</feature>
<gene>
    <name evidence="1 5" type="primary">arsC</name>
    <name type="synonym">yqcM</name>
    <name type="ordered locus">BSU25780</name>
</gene>
<evidence type="ECO:0000255" key="1">
    <source>
        <dbReference type="HAMAP-Rule" id="MF_01624"/>
    </source>
</evidence>
<evidence type="ECO:0000269" key="2">
    <source>
    </source>
</evidence>
<evidence type="ECO:0000269" key="3">
    <source>
    </source>
</evidence>
<evidence type="ECO:0000269" key="4">
    <source>
    </source>
</evidence>
<evidence type="ECO:0000303" key="5">
    <source>
    </source>
</evidence>
<evidence type="ECO:0000303" key="6">
    <source>
    </source>
</evidence>
<evidence type="ECO:0000305" key="7"/>
<evidence type="ECO:0000305" key="8">
    <source>
    </source>
</evidence>
<evidence type="ECO:0000305" key="9">
    <source>
    </source>
</evidence>
<evidence type="ECO:0007744" key="10">
    <source>
        <dbReference type="PDB" id="1JL3"/>
    </source>
</evidence>
<evidence type="ECO:0007744" key="11">
    <source>
        <dbReference type="PDB" id="1Z2D"/>
    </source>
</evidence>
<evidence type="ECO:0007744" key="12">
    <source>
        <dbReference type="PDB" id="1Z2E"/>
    </source>
</evidence>
<evidence type="ECO:0007744" key="13">
    <source>
        <dbReference type="PDB" id="2IPA"/>
    </source>
</evidence>
<evidence type="ECO:0007829" key="14">
    <source>
        <dbReference type="PDB" id="1JL3"/>
    </source>
</evidence>
<evidence type="ECO:0007829" key="15">
    <source>
        <dbReference type="PDB" id="1Z2D"/>
    </source>
</evidence>
<evidence type="ECO:0007829" key="16">
    <source>
        <dbReference type="PDB" id="1Z2E"/>
    </source>
</evidence>